<reference key="1">
    <citation type="submission" date="2009-01" db="EMBL/GenBank/DDBJ databases">
        <title>Complete sequence of chromosome of Methylobacterium nodulans ORS 2060.</title>
        <authorList>
            <consortium name="US DOE Joint Genome Institute"/>
            <person name="Lucas S."/>
            <person name="Copeland A."/>
            <person name="Lapidus A."/>
            <person name="Glavina del Rio T."/>
            <person name="Dalin E."/>
            <person name="Tice H."/>
            <person name="Bruce D."/>
            <person name="Goodwin L."/>
            <person name="Pitluck S."/>
            <person name="Sims D."/>
            <person name="Brettin T."/>
            <person name="Detter J.C."/>
            <person name="Han C."/>
            <person name="Larimer F."/>
            <person name="Land M."/>
            <person name="Hauser L."/>
            <person name="Kyrpides N."/>
            <person name="Ivanova N."/>
            <person name="Marx C.J."/>
            <person name="Richardson P."/>
        </authorList>
    </citation>
    <scope>NUCLEOTIDE SEQUENCE [LARGE SCALE GENOMIC DNA]</scope>
    <source>
        <strain>LMG 21967 / CNCM I-2342 / ORS 2060</strain>
    </source>
</reference>
<dbReference type="EMBL" id="CP001349">
    <property type="protein sequence ID" value="ACL56913.1"/>
    <property type="molecule type" value="Genomic_DNA"/>
</dbReference>
<dbReference type="RefSeq" id="WP_015928602.1">
    <property type="nucleotide sequence ID" value="NC_011894.1"/>
</dbReference>
<dbReference type="SMR" id="B8ISA1"/>
<dbReference type="STRING" id="460265.Mnod_1924"/>
<dbReference type="KEGG" id="mno:Mnod_1924"/>
<dbReference type="eggNOG" id="COG0256">
    <property type="taxonomic scope" value="Bacteria"/>
</dbReference>
<dbReference type="HOGENOM" id="CLU_098841_0_1_5"/>
<dbReference type="OrthoDB" id="9810939at2"/>
<dbReference type="Proteomes" id="UP000008207">
    <property type="component" value="Chromosome"/>
</dbReference>
<dbReference type="GO" id="GO:0022625">
    <property type="term" value="C:cytosolic large ribosomal subunit"/>
    <property type="evidence" value="ECO:0007669"/>
    <property type="project" value="TreeGrafter"/>
</dbReference>
<dbReference type="GO" id="GO:0008097">
    <property type="term" value="F:5S rRNA binding"/>
    <property type="evidence" value="ECO:0007669"/>
    <property type="project" value="TreeGrafter"/>
</dbReference>
<dbReference type="GO" id="GO:0003735">
    <property type="term" value="F:structural constituent of ribosome"/>
    <property type="evidence" value="ECO:0007669"/>
    <property type="project" value="InterPro"/>
</dbReference>
<dbReference type="GO" id="GO:0006412">
    <property type="term" value="P:translation"/>
    <property type="evidence" value="ECO:0007669"/>
    <property type="project" value="UniProtKB-UniRule"/>
</dbReference>
<dbReference type="CDD" id="cd00432">
    <property type="entry name" value="Ribosomal_L18_L5e"/>
    <property type="match status" value="1"/>
</dbReference>
<dbReference type="FunFam" id="3.30.420.100:FF:000001">
    <property type="entry name" value="50S ribosomal protein L18"/>
    <property type="match status" value="1"/>
</dbReference>
<dbReference type="Gene3D" id="3.30.420.100">
    <property type="match status" value="1"/>
</dbReference>
<dbReference type="HAMAP" id="MF_01337_B">
    <property type="entry name" value="Ribosomal_uL18_B"/>
    <property type="match status" value="1"/>
</dbReference>
<dbReference type="InterPro" id="IPR004389">
    <property type="entry name" value="Ribosomal_uL18_bac-type"/>
</dbReference>
<dbReference type="InterPro" id="IPR005484">
    <property type="entry name" value="Ribosomal_uL18_bac/euk"/>
</dbReference>
<dbReference type="NCBIfam" id="TIGR00060">
    <property type="entry name" value="L18_bact"/>
    <property type="match status" value="1"/>
</dbReference>
<dbReference type="PANTHER" id="PTHR12899">
    <property type="entry name" value="39S RIBOSOMAL PROTEIN L18, MITOCHONDRIAL"/>
    <property type="match status" value="1"/>
</dbReference>
<dbReference type="PANTHER" id="PTHR12899:SF3">
    <property type="entry name" value="LARGE RIBOSOMAL SUBUNIT PROTEIN UL18M"/>
    <property type="match status" value="1"/>
</dbReference>
<dbReference type="Pfam" id="PF00861">
    <property type="entry name" value="Ribosomal_L18p"/>
    <property type="match status" value="1"/>
</dbReference>
<dbReference type="SUPFAM" id="SSF53137">
    <property type="entry name" value="Translational machinery components"/>
    <property type="match status" value="1"/>
</dbReference>
<evidence type="ECO:0000255" key="1">
    <source>
        <dbReference type="HAMAP-Rule" id="MF_01337"/>
    </source>
</evidence>
<evidence type="ECO:0000305" key="2"/>
<accession>B8ISA1</accession>
<feature type="chain" id="PRO_1000166239" description="Large ribosomal subunit protein uL18">
    <location>
        <begin position="1"/>
        <end position="120"/>
    </location>
</feature>
<gene>
    <name evidence="1" type="primary">rplR</name>
    <name type="ordered locus">Mnod_1924</name>
</gene>
<keyword id="KW-1185">Reference proteome</keyword>
<keyword id="KW-0687">Ribonucleoprotein</keyword>
<keyword id="KW-0689">Ribosomal protein</keyword>
<keyword id="KW-0694">RNA-binding</keyword>
<keyword id="KW-0699">rRNA-binding</keyword>
<sequence>MSRKIDLLDRRRARVRRAIRAAANGRPRLSVFRSSKQIYVQVIDDANGRTLAAASSLDKDLRARLKTGADKAAAAEVGKLVAERAKAAGVTKVIFDRSGYLYHGRVKALADAAREGGLDF</sequence>
<comment type="function">
    <text evidence="1">This is one of the proteins that bind and probably mediate the attachment of the 5S RNA into the large ribosomal subunit, where it forms part of the central protuberance.</text>
</comment>
<comment type="subunit">
    <text evidence="1">Part of the 50S ribosomal subunit; part of the 5S rRNA/L5/L18/L25 subcomplex. Contacts the 5S and 23S rRNAs.</text>
</comment>
<comment type="similarity">
    <text evidence="1">Belongs to the universal ribosomal protein uL18 family.</text>
</comment>
<name>RL18_METNO</name>
<protein>
    <recommendedName>
        <fullName evidence="1">Large ribosomal subunit protein uL18</fullName>
    </recommendedName>
    <alternativeName>
        <fullName evidence="2">50S ribosomal protein L18</fullName>
    </alternativeName>
</protein>
<proteinExistence type="inferred from homology"/>
<organism>
    <name type="scientific">Methylobacterium nodulans (strain LMG 21967 / CNCM I-2342 / ORS 2060)</name>
    <dbReference type="NCBI Taxonomy" id="460265"/>
    <lineage>
        <taxon>Bacteria</taxon>
        <taxon>Pseudomonadati</taxon>
        <taxon>Pseudomonadota</taxon>
        <taxon>Alphaproteobacteria</taxon>
        <taxon>Hyphomicrobiales</taxon>
        <taxon>Methylobacteriaceae</taxon>
        <taxon>Methylobacterium</taxon>
    </lineage>
</organism>